<proteinExistence type="inferred from homology"/>
<reference key="1">
    <citation type="journal article" date="2000" name="Nucleic Acids Res.">
        <title>Genome sequences of Chlamydia trachomatis MoPn and Chlamydia pneumoniae AR39.</title>
        <authorList>
            <person name="Read T.D."/>
            <person name="Brunham R.C."/>
            <person name="Shen C."/>
            <person name="Gill S.R."/>
            <person name="Heidelberg J.F."/>
            <person name="White O."/>
            <person name="Hickey E.K."/>
            <person name="Peterson J.D."/>
            <person name="Utterback T.R."/>
            <person name="Berry K.J."/>
            <person name="Bass S."/>
            <person name="Linher K.D."/>
            <person name="Weidman J.F."/>
            <person name="Khouri H.M."/>
            <person name="Craven B."/>
            <person name="Bowman C."/>
            <person name="Dodson R.J."/>
            <person name="Gwinn M.L."/>
            <person name="Nelson W.C."/>
            <person name="DeBoy R.T."/>
            <person name="Kolonay J.F."/>
            <person name="McClarty G."/>
            <person name="Salzberg S.L."/>
            <person name="Eisen J.A."/>
            <person name="Fraser C.M."/>
        </authorList>
    </citation>
    <scope>NUCLEOTIDE SEQUENCE [LARGE SCALE GENOMIC DNA]</scope>
    <source>
        <strain>MoPn / Nigg</strain>
    </source>
</reference>
<evidence type="ECO:0000255" key="1">
    <source>
        <dbReference type="HAMAP-Rule" id="MF_01342"/>
    </source>
</evidence>
<evidence type="ECO:0000305" key="2"/>
<organism>
    <name type="scientific">Chlamydia muridarum (strain MoPn / Nigg)</name>
    <dbReference type="NCBI Taxonomy" id="243161"/>
    <lineage>
        <taxon>Bacteria</taxon>
        <taxon>Pseudomonadati</taxon>
        <taxon>Chlamydiota</taxon>
        <taxon>Chlamydiia</taxon>
        <taxon>Chlamydiales</taxon>
        <taxon>Chlamydiaceae</taxon>
        <taxon>Chlamydia/Chlamydophila group</taxon>
        <taxon>Chlamydia</taxon>
    </lineage>
</organism>
<protein>
    <recommendedName>
        <fullName evidence="1">Large ribosomal subunit protein uL16</fullName>
    </recommendedName>
    <alternativeName>
        <fullName evidence="2">50S ribosomal protein L16</fullName>
    </alternativeName>
</protein>
<feature type="chain" id="PRO_0000062074" description="Large ribosomal subunit protein uL16">
    <location>
        <begin position="1"/>
        <end position="138"/>
    </location>
</feature>
<gene>
    <name evidence="1" type="primary">rplP</name>
    <name type="ordered locus">TC_0808</name>
</gene>
<sequence length="138" mass="15775">MLMPKRTKFRKQQKGQFAGLSKGATFVDFGEFGMQTLERGWITSRQIEACRVAINRYLKRKGKVWIRVFPDKSVTKKPAETRMGKGKGAPDHWVAVVRPGRILFEVANVSKEDAQDALRRAAAKLGIRTRFVKRVERV</sequence>
<dbReference type="EMBL" id="AE002160">
    <property type="protein sequence ID" value="AAF39611.1"/>
    <property type="molecule type" value="Genomic_DNA"/>
</dbReference>
<dbReference type="PIR" id="H81664">
    <property type="entry name" value="H81664"/>
</dbReference>
<dbReference type="RefSeq" id="WP_009872721.1">
    <property type="nucleotide sequence ID" value="NZ_CP063055.1"/>
</dbReference>
<dbReference type="SMR" id="Q9PJM1"/>
<dbReference type="GeneID" id="93065360"/>
<dbReference type="KEGG" id="cmu:TC_0808"/>
<dbReference type="eggNOG" id="COG0197">
    <property type="taxonomic scope" value="Bacteria"/>
</dbReference>
<dbReference type="HOGENOM" id="CLU_078858_2_1_0"/>
<dbReference type="OrthoDB" id="9802589at2"/>
<dbReference type="Proteomes" id="UP000000800">
    <property type="component" value="Chromosome"/>
</dbReference>
<dbReference type="GO" id="GO:0022625">
    <property type="term" value="C:cytosolic large ribosomal subunit"/>
    <property type="evidence" value="ECO:0007669"/>
    <property type="project" value="TreeGrafter"/>
</dbReference>
<dbReference type="GO" id="GO:0019843">
    <property type="term" value="F:rRNA binding"/>
    <property type="evidence" value="ECO:0007669"/>
    <property type="project" value="UniProtKB-UniRule"/>
</dbReference>
<dbReference type="GO" id="GO:0003735">
    <property type="term" value="F:structural constituent of ribosome"/>
    <property type="evidence" value="ECO:0007669"/>
    <property type="project" value="InterPro"/>
</dbReference>
<dbReference type="GO" id="GO:0000049">
    <property type="term" value="F:tRNA binding"/>
    <property type="evidence" value="ECO:0007669"/>
    <property type="project" value="UniProtKB-KW"/>
</dbReference>
<dbReference type="GO" id="GO:0006412">
    <property type="term" value="P:translation"/>
    <property type="evidence" value="ECO:0007669"/>
    <property type="project" value="UniProtKB-UniRule"/>
</dbReference>
<dbReference type="CDD" id="cd01433">
    <property type="entry name" value="Ribosomal_L16_L10e"/>
    <property type="match status" value="1"/>
</dbReference>
<dbReference type="FunFam" id="3.90.1170.10:FF:000001">
    <property type="entry name" value="50S ribosomal protein L16"/>
    <property type="match status" value="1"/>
</dbReference>
<dbReference type="Gene3D" id="3.90.1170.10">
    <property type="entry name" value="Ribosomal protein L10e/L16"/>
    <property type="match status" value="1"/>
</dbReference>
<dbReference type="HAMAP" id="MF_01342">
    <property type="entry name" value="Ribosomal_uL16"/>
    <property type="match status" value="1"/>
</dbReference>
<dbReference type="InterPro" id="IPR047873">
    <property type="entry name" value="Ribosomal_uL16"/>
</dbReference>
<dbReference type="InterPro" id="IPR000114">
    <property type="entry name" value="Ribosomal_uL16_bact-type"/>
</dbReference>
<dbReference type="InterPro" id="IPR020798">
    <property type="entry name" value="Ribosomal_uL16_CS"/>
</dbReference>
<dbReference type="InterPro" id="IPR016180">
    <property type="entry name" value="Ribosomal_uL16_dom"/>
</dbReference>
<dbReference type="InterPro" id="IPR036920">
    <property type="entry name" value="Ribosomal_uL16_sf"/>
</dbReference>
<dbReference type="NCBIfam" id="TIGR01164">
    <property type="entry name" value="rplP_bact"/>
    <property type="match status" value="1"/>
</dbReference>
<dbReference type="PANTHER" id="PTHR12220">
    <property type="entry name" value="50S/60S RIBOSOMAL PROTEIN L16"/>
    <property type="match status" value="1"/>
</dbReference>
<dbReference type="PANTHER" id="PTHR12220:SF13">
    <property type="entry name" value="LARGE RIBOSOMAL SUBUNIT PROTEIN UL16M"/>
    <property type="match status" value="1"/>
</dbReference>
<dbReference type="Pfam" id="PF00252">
    <property type="entry name" value="Ribosomal_L16"/>
    <property type="match status" value="1"/>
</dbReference>
<dbReference type="PRINTS" id="PR00060">
    <property type="entry name" value="RIBOSOMALL16"/>
</dbReference>
<dbReference type="SUPFAM" id="SSF54686">
    <property type="entry name" value="Ribosomal protein L16p/L10e"/>
    <property type="match status" value="1"/>
</dbReference>
<dbReference type="PROSITE" id="PS00586">
    <property type="entry name" value="RIBOSOMAL_L16_1"/>
    <property type="match status" value="1"/>
</dbReference>
<dbReference type="PROSITE" id="PS00701">
    <property type="entry name" value="RIBOSOMAL_L16_2"/>
    <property type="match status" value="1"/>
</dbReference>
<keyword id="KW-0687">Ribonucleoprotein</keyword>
<keyword id="KW-0689">Ribosomal protein</keyword>
<keyword id="KW-0694">RNA-binding</keyword>
<keyword id="KW-0699">rRNA-binding</keyword>
<keyword id="KW-0820">tRNA-binding</keyword>
<name>RL16_CHLMU</name>
<accession>Q9PJM1</accession>
<comment type="function">
    <text evidence="1">Binds 23S rRNA and is also seen to make contacts with the A and possibly P site tRNAs.</text>
</comment>
<comment type="subunit">
    <text evidence="1">Part of the 50S ribosomal subunit.</text>
</comment>
<comment type="similarity">
    <text evidence="1">Belongs to the universal ribosomal protein uL16 family.</text>
</comment>